<proteinExistence type="inferred from homology"/>
<keyword id="KW-0053">Apoptosis</keyword>
<keyword id="KW-0472">Membrane</keyword>
<keyword id="KW-0496">Mitochondrion</keyword>
<keyword id="KW-1185">Reference proteome</keyword>
<keyword id="KW-0812">Transmembrane</keyword>
<keyword id="KW-1133">Transmembrane helix</keyword>
<dbReference type="EMBL" id="D83697">
    <property type="protein sequence ID" value="BAA12065.1"/>
    <property type="molecule type" value="mRNA"/>
</dbReference>
<dbReference type="RefSeq" id="NP_476471.1">
    <property type="nucleotide sequence ID" value="NM_057130.5"/>
</dbReference>
<dbReference type="SMR" id="P62817"/>
<dbReference type="FunCoup" id="P62817">
    <property type="interactions" value="35"/>
</dbReference>
<dbReference type="GeneID" id="117271"/>
<dbReference type="KEGG" id="rno:117271"/>
<dbReference type="UCSC" id="RGD:70549">
    <property type="organism name" value="rat"/>
</dbReference>
<dbReference type="AGR" id="RGD:70549"/>
<dbReference type="CTD" id="8739"/>
<dbReference type="RGD" id="70549">
    <property type="gene designation" value="Hrk"/>
</dbReference>
<dbReference type="InParanoid" id="P62817"/>
<dbReference type="OrthoDB" id="9894001at2759"/>
<dbReference type="PRO" id="PR:P62817"/>
<dbReference type="Proteomes" id="UP000002494">
    <property type="component" value="Unplaced"/>
</dbReference>
<dbReference type="GO" id="GO:0016020">
    <property type="term" value="C:membrane"/>
    <property type="evidence" value="ECO:0007669"/>
    <property type="project" value="UniProtKB-SubCell"/>
</dbReference>
<dbReference type="GO" id="GO:0005739">
    <property type="term" value="C:mitochondrion"/>
    <property type="evidence" value="ECO:0000250"/>
    <property type="project" value="UniProtKB"/>
</dbReference>
<dbReference type="GO" id="GO:0006915">
    <property type="term" value="P:apoptotic process"/>
    <property type="evidence" value="ECO:0007669"/>
    <property type="project" value="UniProtKB-KW"/>
</dbReference>
<dbReference type="GO" id="GO:0051365">
    <property type="term" value="P:cellular response to potassium ion starvation"/>
    <property type="evidence" value="ECO:0000315"/>
    <property type="project" value="RGD"/>
</dbReference>
<dbReference type="GO" id="GO:0043065">
    <property type="term" value="P:positive regulation of apoptotic process"/>
    <property type="evidence" value="ECO:0000250"/>
    <property type="project" value="UniProtKB"/>
</dbReference>
<dbReference type="GO" id="GO:0043525">
    <property type="term" value="P:positive regulation of neuron apoptotic process"/>
    <property type="evidence" value="ECO:0000315"/>
    <property type="project" value="RGD"/>
</dbReference>
<dbReference type="GO" id="GO:0031334">
    <property type="term" value="P:positive regulation of protein-containing complex assembly"/>
    <property type="evidence" value="ECO:0000266"/>
    <property type="project" value="RGD"/>
</dbReference>
<dbReference type="GO" id="GO:0090200">
    <property type="term" value="P:positive regulation of release of cytochrome c from mitochondria"/>
    <property type="evidence" value="ECO:0000266"/>
    <property type="project" value="RGD"/>
</dbReference>
<dbReference type="InterPro" id="IPR017249">
    <property type="entry name" value="Apoptosis_activator_harakiri"/>
</dbReference>
<dbReference type="InterPro" id="IPR020728">
    <property type="entry name" value="Bcl2_BH3_motif_CS"/>
</dbReference>
<dbReference type="PANTHER" id="PTHR15056">
    <property type="entry name" value="ACTIVATOR OF APOPTOSIS HARAKIRI"/>
    <property type="match status" value="1"/>
</dbReference>
<dbReference type="PANTHER" id="PTHR15056:SF0">
    <property type="entry name" value="ACTIVATOR OF APOPTOSIS HARAKIRI"/>
    <property type="match status" value="1"/>
</dbReference>
<dbReference type="Pfam" id="PF15196">
    <property type="entry name" value="Harakiri"/>
    <property type="match status" value="1"/>
</dbReference>
<dbReference type="PIRSF" id="PIRSF037635">
    <property type="entry name" value="BID3"/>
    <property type="match status" value="1"/>
</dbReference>
<dbReference type="PROSITE" id="PS01259">
    <property type="entry name" value="BH3"/>
    <property type="match status" value="1"/>
</dbReference>
<comment type="function">
    <text evidence="1">Promotes apoptosis.</text>
</comment>
<comment type="subunit">
    <text evidence="1">Interacts with BCL2 and BCL2L1. Interacts with C1QBP (By similarity).</text>
</comment>
<comment type="subcellular location">
    <subcellularLocation>
        <location evidence="1">Membrane</location>
        <topology evidence="1">Single-pass membrane protein</topology>
    </subcellularLocation>
    <subcellularLocation>
        <location evidence="1">Mitochondrion</location>
    </subcellularLocation>
</comment>
<comment type="domain">
    <text evidence="1">The BH3 motif is required for the induction of cell death.</text>
</comment>
<sequence>MCPCPRHRGRGPPAVCGCGDARPGLRWAAAQVTALRLQALGDELHRRAMRRRARPRDPLPALLPALRARWPWLCAAAQVAALAAWLLGRRSA</sequence>
<accession>P62817</accession>
<accession>P70678</accession>
<gene>
    <name type="primary">Hrk</name>
    <name type="synonym">Bid3</name>
    <name type="synonym">Dp5</name>
</gene>
<feature type="chain" id="PRO_0000143108" description="Activator of apoptosis harakiri">
    <location>
        <begin position="1"/>
        <end position="92"/>
    </location>
</feature>
<feature type="transmembrane region" description="Helical" evidence="2">
    <location>
        <begin position="70"/>
        <end position="88"/>
    </location>
</feature>
<feature type="short sequence motif" description="BH3">
    <location>
        <begin position="33"/>
        <end position="47"/>
    </location>
</feature>
<evidence type="ECO:0000250" key="1"/>
<evidence type="ECO:0000255" key="2"/>
<organism>
    <name type="scientific">Rattus norvegicus</name>
    <name type="common">Rat</name>
    <dbReference type="NCBI Taxonomy" id="10116"/>
    <lineage>
        <taxon>Eukaryota</taxon>
        <taxon>Metazoa</taxon>
        <taxon>Chordata</taxon>
        <taxon>Craniata</taxon>
        <taxon>Vertebrata</taxon>
        <taxon>Euteleostomi</taxon>
        <taxon>Mammalia</taxon>
        <taxon>Eutheria</taxon>
        <taxon>Euarchontoglires</taxon>
        <taxon>Glires</taxon>
        <taxon>Rodentia</taxon>
        <taxon>Myomorpha</taxon>
        <taxon>Muroidea</taxon>
        <taxon>Muridae</taxon>
        <taxon>Murinae</taxon>
        <taxon>Rattus</taxon>
    </lineage>
</organism>
<protein>
    <recommendedName>
        <fullName>Activator of apoptosis harakiri</fullName>
    </recommendedName>
    <alternativeName>
        <fullName>BH3-interacting domain-containing protein 3</fullName>
    </alternativeName>
    <alternativeName>
        <fullName>Neuronal death protein DP5</fullName>
    </alternativeName>
</protein>
<name>HRK_RAT</name>
<reference key="1">
    <citation type="journal article" date="1997" name="J. Biol. Chem.">
        <title>Molecular cloning of a novel polypeptide, DP5, induced during programmed neuronal death.</title>
        <authorList>
            <person name="Imaizumi K."/>
            <person name="Tsuda M."/>
            <person name="Imai Y."/>
            <person name="Wanaka A."/>
            <person name="Takagi T."/>
            <person name="Tohyama M."/>
        </authorList>
    </citation>
    <scope>NUCLEOTIDE SEQUENCE [MRNA]</scope>
    <source>
        <tissue>Brain</tissue>
    </source>
</reference>